<gene>
    <name evidence="1" type="primary">rplL</name>
    <name type="ordered locus">Desal_1178</name>
</gene>
<comment type="function">
    <text evidence="1">Forms part of the ribosomal stalk which helps the ribosome interact with GTP-bound translation factors. Is thus essential for accurate translation.</text>
</comment>
<comment type="subunit">
    <text evidence="1">Homodimer. Part of the ribosomal stalk of the 50S ribosomal subunit. Forms a multimeric L10(L12)X complex, where L10 forms an elongated spine to which 2 to 4 L12 dimers bind in a sequential fashion. Binds GTP-bound translation factors.</text>
</comment>
<comment type="similarity">
    <text evidence="1">Belongs to the bacterial ribosomal protein bL12 family.</text>
</comment>
<evidence type="ECO:0000255" key="1">
    <source>
        <dbReference type="HAMAP-Rule" id="MF_00368"/>
    </source>
</evidence>
<evidence type="ECO:0000305" key="2"/>
<protein>
    <recommendedName>
        <fullName evidence="1">Large ribosomal subunit protein bL12</fullName>
    </recommendedName>
    <alternativeName>
        <fullName evidence="2">50S ribosomal protein L7/L12</fullName>
    </alternativeName>
</protein>
<feature type="chain" id="PRO_1000205554" description="Large ribosomal subunit protein bL12">
    <location>
        <begin position="1"/>
        <end position="129"/>
    </location>
</feature>
<reference key="1">
    <citation type="submission" date="2009-06" db="EMBL/GenBank/DDBJ databases">
        <title>Complete sequence of Desulfovibrio salexigens DSM 2638.</title>
        <authorList>
            <consortium name="US DOE Joint Genome Institute"/>
            <person name="Lucas S."/>
            <person name="Copeland A."/>
            <person name="Lapidus A."/>
            <person name="Glavina del Rio T."/>
            <person name="Tice H."/>
            <person name="Bruce D."/>
            <person name="Goodwin L."/>
            <person name="Pitluck S."/>
            <person name="Munk A.C."/>
            <person name="Brettin T."/>
            <person name="Detter J.C."/>
            <person name="Han C."/>
            <person name="Tapia R."/>
            <person name="Larimer F."/>
            <person name="Land M."/>
            <person name="Hauser L."/>
            <person name="Kyrpides N."/>
            <person name="Anderson I."/>
            <person name="Wall J.D."/>
            <person name="Arkin A.P."/>
            <person name="Dehal P."/>
            <person name="Chivian D."/>
            <person name="Giles B."/>
            <person name="Hazen T.C."/>
        </authorList>
    </citation>
    <scope>NUCLEOTIDE SEQUENCE [LARGE SCALE GENOMIC DNA]</scope>
    <source>
        <strain>ATCC 14822 / DSM 2638 / NCIMB 8403 / VKM B-1763</strain>
    </source>
</reference>
<name>RL7_MARSD</name>
<dbReference type="EMBL" id="CP001649">
    <property type="protein sequence ID" value="ACS79241.1"/>
    <property type="molecule type" value="Genomic_DNA"/>
</dbReference>
<dbReference type="RefSeq" id="WP_015851060.1">
    <property type="nucleotide sequence ID" value="NC_012881.1"/>
</dbReference>
<dbReference type="SMR" id="C6C178"/>
<dbReference type="STRING" id="526222.Desal_1178"/>
<dbReference type="KEGG" id="dsa:Desal_1178"/>
<dbReference type="eggNOG" id="COG0222">
    <property type="taxonomic scope" value="Bacteria"/>
</dbReference>
<dbReference type="HOGENOM" id="CLU_086499_3_0_7"/>
<dbReference type="OrthoDB" id="9811748at2"/>
<dbReference type="Proteomes" id="UP000002601">
    <property type="component" value="Chromosome"/>
</dbReference>
<dbReference type="GO" id="GO:0022625">
    <property type="term" value="C:cytosolic large ribosomal subunit"/>
    <property type="evidence" value="ECO:0007669"/>
    <property type="project" value="TreeGrafter"/>
</dbReference>
<dbReference type="GO" id="GO:0003729">
    <property type="term" value="F:mRNA binding"/>
    <property type="evidence" value="ECO:0007669"/>
    <property type="project" value="TreeGrafter"/>
</dbReference>
<dbReference type="GO" id="GO:0003735">
    <property type="term" value="F:structural constituent of ribosome"/>
    <property type="evidence" value="ECO:0007669"/>
    <property type="project" value="InterPro"/>
</dbReference>
<dbReference type="GO" id="GO:0006412">
    <property type="term" value="P:translation"/>
    <property type="evidence" value="ECO:0007669"/>
    <property type="project" value="UniProtKB-UniRule"/>
</dbReference>
<dbReference type="CDD" id="cd00387">
    <property type="entry name" value="Ribosomal_L7_L12"/>
    <property type="match status" value="1"/>
</dbReference>
<dbReference type="FunFam" id="3.30.1390.10:FF:000001">
    <property type="entry name" value="50S ribosomal protein L7/L12"/>
    <property type="match status" value="1"/>
</dbReference>
<dbReference type="Gene3D" id="3.30.1390.10">
    <property type="match status" value="1"/>
</dbReference>
<dbReference type="Gene3D" id="1.20.5.710">
    <property type="entry name" value="Single helix bin"/>
    <property type="match status" value="1"/>
</dbReference>
<dbReference type="HAMAP" id="MF_00368">
    <property type="entry name" value="Ribosomal_bL12"/>
    <property type="match status" value="1"/>
</dbReference>
<dbReference type="InterPro" id="IPR000206">
    <property type="entry name" value="Ribosomal_bL12"/>
</dbReference>
<dbReference type="InterPro" id="IPR013823">
    <property type="entry name" value="Ribosomal_bL12_C"/>
</dbReference>
<dbReference type="InterPro" id="IPR014719">
    <property type="entry name" value="Ribosomal_bL12_C/ClpS-like"/>
</dbReference>
<dbReference type="InterPro" id="IPR008932">
    <property type="entry name" value="Ribosomal_bL12_oligo"/>
</dbReference>
<dbReference type="InterPro" id="IPR036235">
    <property type="entry name" value="Ribosomal_bL12_oligo_N_sf"/>
</dbReference>
<dbReference type="NCBIfam" id="TIGR00855">
    <property type="entry name" value="L12"/>
    <property type="match status" value="1"/>
</dbReference>
<dbReference type="PANTHER" id="PTHR45987">
    <property type="entry name" value="39S RIBOSOMAL PROTEIN L12"/>
    <property type="match status" value="1"/>
</dbReference>
<dbReference type="PANTHER" id="PTHR45987:SF4">
    <property type="entry name" value="LARGE RIBOSOMAL SUBUNIT PROTEIN BL12M"/>
    <property type="match status" value="1"/>
</dbReference>
<dbReference type="Pfam" id="PF00542">
    <property type="entry name" value="Ribosomal_L12"/>
    <property type="match status" value="1"/>
</dbReference>
<dbReference type="Pfam" id="PF16320">
    <property type="entry name" value="Ribosomal_L12_N"/>
    <property type="match status" value="1"/>
</dbReference>
<dbReference type="SUPFAM" id="SSF54736">
    <property type="entry name" value="ClpS-like"/>
    <property type="match status" value="1"/>
</dbReference>
<dbReference type="SUPFAM" id="SSF48300">
    <property type="entry name" value="Ribosomal protein L7/12, oligomerisation (N-terminal) domain"/>
    <property type="match status" value="1"/>
</dbReference>
<sequence>MADITKDQVVEFISNMTVLELSEFITELEEKFGVSAAAPVAAVAAMPGAAGGEAAGGEEQTEFDVILKSAGGNKIAVIKAVRALTGLGLKEAKAKVDEAPAAIKEGVEKAEAEEALKQLEEAGAEAEMK</sequence>
<accession>C6C178</accession>
<keyword id="KW-1185">Reference proteome</keyword>
<keyword id="KW-0687">Ribonucleoprotein</keyword>
<keyword id="KW-0689">Ribosomal protein</keyword>
<organism>
    <name type="scientific">Maridesulfovibrio salexigens (strain ATCC 14822 / DSM 2638 / NCIMB 8403 / VKM B-1763)</name>
    <name type="common">Desulfovibrio salexigens</name>
    <dbReference type="NCBI Taxonomy" id="526222"/>
    <lineage>
        <taxon>Bacteria</taxon>
        <taxon>Pseudomonadati</taxon>
        <taxon>Thermodesulfobacteriota</taxon>
        <taxon>Desulfovibrionia</taxon>
        <taxon>Desulfovibrionales</taxon>
        <taxon>Desulfovibrionaceae</taxon>
        <taxon>Maridesulfovibrio</taxon>
    </lineage>
</organism>
<proteinExistence type="inferred from homology"/>